<comment type="cofactor">
    <cofactor evidence="1">
        <name>Zn(2+)</name>
        <dbReference type="ChEBI" id="CHEBI:29105"/>
    </cofactor>
    <text evidence="1">Binds 1 zinc ion per subunit.</text>
</comment>
<comment type="subunit">
    <text evidence="1">Part of the 30S ribosomal subunit.</text>
</comment>
<comment type="similarity">
    <text evidence="1">Belongs to the eukaryotic ribosomal protein eS31 family.</text>
</comment>
<gene>
    <name evidence="1" type="primary">rps27ae</name>
    <name type="ordered locus">PAE2432</name>
</gene>
<feature type="chain" id="PRO_0000137702" description="Small ribosomal subunit protein eS31">
    <location>
        <begin position="1"/>
        <end position="65"/>
    </location>
</feature>
<feature type="zinc finger region" description="C4-type" evidence="1">
    <location>
        <begin position="36"/>
        <end position="58"/>
    </location>
</feature>
<feature type="binding site" evidence="1">
    <location>
        <position position="36"/>
    </location>
    <ligand>
        <name>Zn(2+)</name>
        <dbReference type="ChEBI" id="CHEBI:29105"/>
    </ligand>
</feature>
<feature type="binding site" evidence="1">
    <location>
        <position position="39"/>
    </location>
    <ligand>
        <name>Zn(2+)</name>
        <dbReference type="ChEBI" id="CHEBI:29105"/>
    </ligand>
</feature>
<feature type="binding site" evidence="1">
    <location>
        <position position="55"/>
    </location>
    <ligand>
        <name>Zn(2+)</name>
        <dbReference type="ChEBI" id="CHEBI:29105"/>
    </ligand>
</feature>
<feature type="binding site" evidence="1">
    <location>
        <position position="58"/>
    </location>
    <ligand>
        <name>Zn(2+)</name>
        <dbReference type="ChEBI" id="CHEBI:29105"/>
    </ligand>
</feature>
<sequence length="65" mass="7615">MSKKAPAQKEKKLPRAATWYELDLEKGVFRFKNKLCPKCGSVMAFHKEPVPRWHCGKCGYTQFQR</sequence>
<keyword id="KW-0479">Metal-binding</keyword>
<keyword id="KW-1185">Reference proteome</keyword>
<keyword id="KW-0687">Ribonucleoprotein</keyword>
<keyword id="KW-0689">Ribosomal protein</keyword>
<keyword id="KW-0862">Zinc</keyword>
<keyword id="KW-0863">Zinc-finger</keyword>
<dbReference type="EMBL" id="AE009441">
    <property type="protein sequence ID" value="AAL64190.1"/>
    <property type="molecule type" value="Genomic_DNA"/>
</dbReference>
<dbReference type="RefSeq" id="WP_011008658.1">
    <property type="nucleotide sequence ID" value="NC_003364.1"/>
</dbReference>
<dbReference type="SMR" id="Q8ZV66"/>
<dbReference type="FunCoup" id="Q8ZV66">
    <property type="interactions" value="59"/>
</dbReference>
<dbReference type="STRING" id="178306.PAE2432"/>
<dbReference type="EnsemblBacteria" id="AAL64190">
    <property type="protein sequence ID" value="AAL64190"/>
    <property type="gene ID" value="PAE2432"/>
</dbReference>
<dbReference type="GeneID" id="1464531"/>
<dbReference type="KEGG" id="pai:PAE2432"/>
<dbReference type="PATRIC" id="fig|178306.9.peg.1814"/>
<dbReference type="eggNOG" id="arCOG04183">
    <property type="taxonomic scope" value="Archaea"/>
</dbReference>
<dbReference type="HOGENOM" id="CLU_179743_1_0_2"/>
<dbReference type="InParanoid" id="Q8ZV66"/>
<dbReference type="Proteomes" id="UP000002439">
    <property type="component" value="Chromosome"/>
</dbReference>
<dbReference type="GO" id="GO:1990904">
    <property type="term" value="C:ribonucleoprotein complex"/>
    <property type="evidence" value="ECO:0007669"/>
    <property type="project" value="UniProtKB-KW"/>
</dbReference>
<dbReference type="GO" id="GO:0005840">
    <property type="term" value="C:ribosome"/>
    <property type="evidence" value="ECO:0007669"/>
    <property type="project" value="UniProtKB-KW"/>
</dbReference>
<dbReference type="GO" id="GO:0003735">
    <property type="term" value="F:structural constituent of ribosome"/>
    <property type="evidence" value="ECO:0007669"/>
    <property type="project" value="InterPro"/>
</dbReference>
<dbReference type="GO" id="GO:0008270">
    <property type="term" value="F:zinc ion binding"/>
    <property type="evidence" value="ECO:0007669"/>
    <property type="project" value="UniProtKB-UniRule"/>
</dbReference>
<dbReference type="GO" id="GO:0006412">
    <property type="term" value="P:translation"/>
    <property type="evidence" value="ECO:0007669"/>
    <property type="project" value="UniProtKB-UniRule"/>
</dbReference>
<dbReference type="Gene3D" id="6.20.50.180">
    <property type="match status" value="1"/>
</dbReference>
<dbReference type="HAMAP" id="MF_00777">
    <property type="entry name" value="Ribosomal_eS31"/>
    <property type="match status" value="1"/>
</dbReference>
<dbReference type="InterPro" id="IPR002906">
    <property type="entry name" value="Ribosomal_eS31"/>
</dbReference>
<dbReference type="InterPro" id="IPR022845">
    <property type="entry name" value="Ribosomal_eS31_arc"/>
</dbReference>
<dbReference type="InterPro" id="IPR011332">
    <property type="entry name" value="Ribosomal_zn-bd"/>
</dbReference>
<dbReference type="NCBIfam" id="NF001669">
    <property type="entry name" value="PRK00432.1"/>
    <property type="match status" value="1"/>
</dbReference>
<dbReference type="Pfam" id="PF01599">
    <property type="entry name" value="Ribosomal_S27"/>
    <property type="match status" value="1"/>
</dbReference>
<dbReference type="SMART" id="SM01402">
    <property type="entry name" value="Ribosomal_S27"/>
    <property type="match status" value="1"/>
</dbReference>
<dbReference type="SUPFAM" id="SSF57829">
    <property type="entry name" value="Zn-binding ribosomal proteins"/>
    <property type="match status" value="1"/>
</dbReference>
<name>RS27A_PYRAE</name>
<organism>
    <name type="scientific">Pyrobaculum aerophilum (strain ATCC 51768 / DSM 7523 / JCM 9630 / CIP 104966 / NBRC 100827 / IM2)</name>
    <dbReference type="NCBI Taxonomy" id="178306"/>
    <lineage>
        <taxon>Archaea</taxon>
        <taxon>Thermoproteota</taxon>
        <taxon>Thermoprotei</taxon>
        <taxon>Thermoproteales</taxon>
        <taxon>Thermoproteaceae</taxon>
        <taxon>Pyrobaculum</taxon>
    </lineage>
</organism>
<proteinExistence type="inferred from homology"/>
<accession>Q8ZV66</accession>
<evidence type="ECO:0000255" key="1">
    <source>
        <dbReference type="HAMAP-Rule" id="MF_00777"/>
    </source>
</evidence>
<evidence type="ECO:0000305" key="2"/>
<protein>
    <recommendedName>
        <fullName evidence="1">Small ribosomal subunit protein eS31</fullName>
    </recommendedName>
    <alternativeName>
        <fullName evidence="2">30S ribosomal protein S27ae</fullName>
    </alternativeName>
</protein>
<reference key="1">
    <citation type="journal article" date="2002" name="Proc. Natl. Acad. Sci. U.S.A.">
        <title>Genome sequence of the hyperthermophilic crenarchaeon Pyrobaculum aerophilum.</title>
        <authorList>
            <person name="Fitz-Gibbon S.T."/>
            <person name="Ladner H."/>
            <person name="Kim U.-J."/>
            <person name="Stetter K.O."/>
            <person name="Simon M.I."/>
            <person name="Miller J.H."/>
        </authorList>
    </citation>
    <scope>NUCLEOTIDE SEQUENCE [LARGE SCALE GENOMIC DNA]</scope>
    <source>
        <strain>ATCC 51768 / DSM 7523 / JCM 9630 / CIP 104966 / NBRC 100827 / IM2</strain>
    </source>
</reference>